<keyword id="KW-0342">GTP-binding</keyword>
<keyword id="KW-0378">Hydrolase</keyword>
<keyword id="KW-0456">Lyase</keyword>
<keyword id="KW-0460">Magnesium</keyword>
<keyword id="KW-0464">Manganese</keyword>
<keyword id="KW-0479">Metal-binding</keyword>
<keyword id="KW-0511">Multifunctional enzyme</keyword>
<keyword id="KW-0547">Nucleotide-binding</keyword>
<keyword id="KW-0686">Riboflavin biosynthesis</keyword>
<keyword id="KW-0862">Zinc</keyword>
<feature type="chain" id="PRO_1000085899" description="Riboflavin biosynthesis protein RibBA">
    <location>
        <begin position="1"/>
        <end position="420"/>
    </location>
</feature>
<feature type="region of interest" description="DHBP synthase">
    <location>
        <begin position="1"/>
        <end position="202"/>
    </location>
</feature>
<feature type="region of interest" description="GTP cyclohydrolase II">
    <location>
        <begin position="203"/>
        <end position="420"/>
    </location>
</feature>
<feature type="active site" description="Proton acceptor; for GTP cyclohydrolase activity" evidence="1">
    <location>
        <position position="331"/>
    </location>
</feature>
<feature type="active site" description="Nucleophile; for GTP cyclohydrolase activity" evidence="1">
    <location>
        <position position="333"/>
    </location>
</feature>
<feature type="binding site" evidence="1">
    <location>
        <begin position="28"/>
        <end position="29"/>
    </location>
    <ligand>
        <name>D-ribulose 5-phosphate</name>
        <dbReference type="ChEBI" id="CHEBI:58121"/>
    </ligand>
</feature>
<feature type="binding site" evidence="1">
    <location>
        <position position="29"/>
    </location>
    <ligand>
        <name>Mg(2+)</name>
        <dbReference type="ChEBI" id="CHEBI:18420"/>
        <label>1</label>
    </ligand>
</feature>
<feature type="binding site" evidence="1">
    <location>
        <position position="29"/>
    </location>
    <ligand>
        <name>Mg(2+)</name>
        <dbReference type="ChEBI" id="CHEBI:18420"/>
        <label>2</label>
    </ligand>
</feature>
<feature type="binding site" evidence="1">
    <location>
        <position position="33"/>
    </location>
    <ligand>
        <name>D-ribulose 5-phosphate</name>
        <dbReference type="ChEBI" id="CHEBI:58121"/>
    </ligand>
</feature>
<feature type="binding site" evidence="1">
    <location>
        <begin position="141"/>
        <end position="145"/>
    </location>
    <ligand>
        <name>D-ribulose 5-phosphate</name>
        <dbReference type="ChEBI" id="CHEBI:58121"/>
    </ligand>
</feature>
<feature type="binding site" evidence="1">
    <location>
        <position position="144"/>
    </location>
    <ligand>
        <name>Mg(2+)</name>
        <dbReference type="ChEBI" id="CHEBI:18420"/>
        <label>2</label>
    </ligand>
</feature>
<feature type="binding site" evidence="1">
    <location>
        <position position="165"/>
    </location>
    <ligand>
        <name>D-ribulose 5-phosphate</name>
        <dbReference type="ChEBI" id="CHEBI:58121"/>
    </ligand>
</feature>
<feature type="binding site" evidence="1">
    <location>
        <begin position="253"/>
        <end position="257"/>
    </location>
    <ligand>
        <name>GTP</name>
        <dbReference type="ChEBI" id="CHEBI:37565"/>
    </ligand>
</feature>
<feature type="binding site" evidence="1">
    <location>
        <position position="258"/>
    </location>
    <ligand>
        <name>Zn(2+)</name>
        <dbReference type="ChEBI" id="CHEBI:29105"/>
        <note>catalytic</note>
    </ligand>
</feature>
<feature type="binding site" evidence="1">
    <location>
        <position position="269"/>
    </location>
    <ligand>
        <name>Zn(2+)</name>
        <dbReference type="ChEBI" id="CHEBI:29105"/>
        <note>catalytic</note>
    </ligand>
</feature>
<feature type="binding site" evidence="1">
    <location>
        <position position="271"/>
    </location>
    <ligand>
        <name>Zn(2+)</name>
        <dbReference type="ChEBI" id="CHEBI:29105"/>
        <note>catalytic</note>
    </ligand>
</feature>
<feature type="binding site" evidence="1">
    <location>
        <position position="274"/>
    </location>
    <ligand>
        <name>GTP</name>
        <dbReference type="ChEBI" id="CHEBI:37565"/>
    </ligand>
</feature>
<feature type="binding site" evidence="1">
    <location>
        <begin position="297"/>
        <end position="299"/>
    </location>
    <ligand>
        <name>GTP</name>
        <dbReference type="ChEBI" id="CHEBI:37565"/>
    </ligand>
</feature>
<feature type="binding site" evidence="1">
    <location>
        <position position="319"/>
    </location>
    <ligand>
        <name>GTP</name>
        <dbReference type="ChEBI" id="CHEBI:37565"/>
    </ligand>
</feature>
<feature type="binding site" evidence="1">
    <location>
        <position position="354"/>
    </location>
    <ligand>
        <name>GTP</name>
        <dbReference type="ChEBI" id="CHEBI:37565"/>
    </ligand>
</feature>
<feature type="binding site" evidence="1">
    <location>
        <position position="359"/>
    </location>
    <ligand>
        <name>GTP</name>
        <dbReference type="ChEBI" id="CHEBI:37565"/>
    </ligand>
</feature>
<feature type="site" description="Essential for DHBP synthase activity" evidence="1">
    <location>
        <position position="127"/>
    </location>
</feature>
<feature type="site" description="Essential for DHBP synthase activity" evidence="1">
    <location>
        <position position="165"/>
    </location>
</feature>
<proteinExistence type="inferred from homology"/>
<name>RIBBA_SALAI</name>
<comment type="function">
    <text evidence="1">Catalyzes the conversion of D-ribulose 5-phosphate to formate and 3,4-dihydroxy-2-butanone 4-phosphate.</text>
</comment>
<comment type="function">
    <text evidence="1">Catalyzes the conversion of GTP to 2,5-diamino-6-ribosylamino-4(3H)-pyrimidinone 5'-phosphate (DARP), formate and pyrophosphate.</text>
</comment>
<comment type="catalytic activity">
    <reaction evidence="1">
        <text>D-ribulose 5-phosphate = (2S)-2-hydroxy-3-oxobutyl phosphate + formate + H(+)</text>
        <dbReference type="Rhea" id="RHEA:18457"/>
        <dbReference type="ChEBI" id="CHEBI:15378"/>
        <dbReference type="ChEBI" id="CHEBI:15740"/>
        <dbReference type="ChEBI" id="CHEBI:58121"/>
        <dbReference type="ChEBI" id="CHEBI:58830"/>
        <dbReference type="EC" id="4.1.99.12"/>
    </reaction>
</comment>
<comment type="catalytic activity">
    <reaction evidence="1">
        <text>GTP + 4 H2O = 2,5-diamino-6-hydroxy-4-(5-phosphoribosylamino)-pyrimidine + formate + 2 phosphate + 3 H(+)</text>
        <dbReference type="Rhea" id="RHEA:23704"/>
        <dbReference type="ChEBI" id="CHEBI:15377"/>
        <dbReference type="ChEBI" id="CHEBI:15378"/>
        <dbReference type="ChEBI" id="CHEBI:15740"/>
        <dbReference type="ChEBI" id="CHEBI:37565"/>
        <dbReference type="ChEBI" id="CHEBI:43474"/>
        <dbReference type="ChEBI" id="CHEBI:58614"/>
        <dbReference type="EC" id="3.5.4.25"/>
    </reaction>
</comment>
<comment type="cofactor">
    <cofactor evidence="1">
        <name>Mg(2+)</name>
        <dbReference type="ChEBI" id="CHEBI:18420"/>
    </cofactor>
    <cofactor evidence="1">
        <name>Mn(2+)</name>
        <dbReference type="ChEBI" id="CHEBI:29035"/>
    </cofactor>
    <text evidence="1">Binds 2 divalent metal cations per subunit. Magnesium or manganese.</text>
</comment>
<comment type="cofactor">
    <cofactor evidence="1">
        <name>Zn(2+)</name>
        <dbReference type="ChEBI" id="CHEBI:29105"/>
    </cofactor>
    <text evidence="1">Binds 1 zinc ion per subunit.</text>
</comment>
<comment type="pathway">
    <text evidence="1">Cofactor biosynthesis; riboflavin biosynthesis; 2-hydroxy-3-oxobutyl phosphate from D-ribulose 5-phosphate: step 1/1.</text>
</comment>
<comment type="pathway">
    <text evidence="1">Cofactor biosynthesis; riboflavin biosynthesis; 5-amino-6-(D-ribitylamino)uracil from GTP: step 1/4.</text>
</comment>
<comment type="similarity">
    <text evidence="1">In the N-terminal section; belongs to the DHBP synthase family.</text>
</comment>
<comment type="similarity">
    <text evidence="1">In the C-terminal section; belongs to the GTP cyclohydrolase II family.</text>
</comment>
<evidence type="ECO:0000255" key="1">
    <source>
        <dbReference type="HAMAP-Rule" id="MF_01283"/>
    </source>
</evidence>
<reference key="1">
    <citation type="submission" date="2007-10" db="EMBL/GenBank/DDBJ databases">
        <title>Complete sequence of Salinispora arenicola CNS-205.</title>
        <authorList>
            <consortium name="US DOE Joint Genome Institute"/>
            <person name="Copeland A."/>
            <person name="Lucas S."/>
            <person name="Lapidus A."/>
            <person name="Barry K."/>
            <person name="Glavina del Rio T."/>
            <person name="Dalin E."/>
            <person name="Tice H."/>
            <person name="Pitluck S."/>
            <person name="Foster B."/>
            <person name="Schmutz J."/>
            <person name="Larimer F."/>
            <person name="Land M."/>
            <person name="Hauser L."/>
            <person name="Kyrpides N."/>
            <person name="Ivanova N."/>
            <person name="Jensen P.R."/>
            <person name="Moore B.S."/>
            <person name="Penn K."/>
            <person name="Jenkins C."/>
            <person name="Udwary D."/>
            <person name="Xiang L."/>
            <person name="Gontang E."/>
            <person name="Richardson P."/>
        </authorList>
    </citation>
    <scope>NUCLEOTIDE SEQUENCE [LARGE SCALE GENOMIC DNA]</scope>
    <source>
        <strain>CNS-205</strain>
    </source>
</reference>
<organism>
    <name type="scientific">Salinispora arenicola (strain CNS-205)</name>
    <dbReference type="NCBI Taxonomy" id="391037"/>
    <lineage>
        <taxon>Bacteria</taxon>
        <taxon>Bacillati</taxon>
        <taxon>Actinomycetota</taxon>
        <taxon>Actinomycetes</taxon>
        <taxon>Micromonosporales</taxon>
        <taxon>Micromonosporaceae</taxon>
        <taxon>Salinispora</taxon>
    </lineage>
</organism>
<protein>
    <recommendedName>
        <fullName evidence="1">Riboflavin biosynthesis protein RibBA</fullName>
    </recommendedName>
    <domain>
        <recommendedName>
            <fullName evidence="1">3,4-dihydroxy-2-butanone 4-phosphate synthase</fullName>
            <shortName evidence="1">DHBP synthase</shortName>
            <ecNumber evidence="1">4.1.99.12</ecNumber>
        </recommendedName>
    </domain>
    <domain>
        <recommendedName>
            <fullName evidence="1">GTP cyclohydrolase-2</fullName>
            <ecNumber evidence="1">3.5.4.25</ecNumber>
        </recommendedName>
        <alternativeName>
            <fullName evidence="1">GTP cyclohydrolase II</fullName>
        </alternativeName>
    </domain>
</protein>
<sequence>MTTFGTIEQAMAEIVAGRPVVVVDDANRENEGDLIFAAELATPELVAFMVRYTSGYICAPLTEDECDRLDLPPMHHTNQDRRGTAYTVTVDAREGVSTGISAADRAHTIRLLADPRTGPADLARPGHVVPLRARQGGVLRRPGHTEAAIDLTRLAGLRPAGVLCELVNDDGTMMRVPDLERFCAEHSLVLITIADLVAYRRRTEKQVELVAEARMPTRHGVFRAFGYRSDYDSAEHVALVMGDLGDGRDVLVRVHSECLTGDVLGSLRCDCGPQLNAALDQVAREGRGVVLYVRGHEGRGIGLLHKLQAYQLQDTGRDTVDANLDLGLPADARDYGTGAQILYDLGVRSMRLLTNNPAKRAGLEGYGLTVAGRVELPVRPHPENVRYLRTKRDRMGHLLEFDEVIEAPMGRAVVGDGIGA</sequence>
<accession>A8LY38</accession>
<dbReference type="EC" id="4.1.99.12" evidence="1"/>
<dbReference type="EC" id="3.5.4.25" evidence="1"/>
<dbReference type="EMBL" id="CP000850">
    <property type="protein sequence ID" value="ABV97755.1"/>
    <property type="molecule type" value="Genomic_DNA"/>
</dbReference>
<dbReference type="SMR" id="A8LY38"/>
<dbReference type="STRING" id="391037.Sare_1870"/>
<dbReference type="KEGG" id="saq:Sare_1870"/>
<dbReference type="PATRIC" id="fig|391037.6.peg.1898"/>
<dbReference type="eggNOG" id="COG0108">
    <property type="taxonomic scope" value="Bacteria"/>
</dbReference>
<dbReference type="eggNOG" id="COG0807">
    <property type="taxonomic scope" value="Bacteria"/>
</dbReference>
<dbReference type="HOGENOM" id="CLU_020273_1_2_11"/>
<dbReference type="OrthoDB" id="9793111at2"/>
<dbReference type="UniPathway" id="UPA00275">
    <property type="reaction ID" value="UER00399"/>
</dbReference>
<dbReference type="UniPathway" id="UPA00275">
    <property type="reaction ID" value="UER00400"/>
</dbReference>
<dbReference type="GO" id="GO:0005829">
    <property type="term" value="C:cytosol"/>
    <property type="evidence" value="ECO:0007669"/>
    <property type="project" value="TreeGrafter"/>
</dbReference>
<dbReference type="GO" id="GO:0008686">
    <property type="term" value="F:3,4-dihydroxy-2-butanone-4-phosphate synthase activity"/>
    <property type="evidence" value="ECO:0007669"/>
    <property type="project" value="UniProtKB-UniRule"/>
</dbReference>
<dbReference type="GO" id="GO:0005525">
    <property type="term" value="F:GTP binding"/>
    <property type="evidence" value="ECO:0007669"/>
    <property type="project" value="UniProtKB-KW"/>
</dbReference>
<dbReference type="GO" id="GO:0003935">
    <property type="term" value="F:GTP cyclohydrolase II activity"/>
    <property type="evidence" value="ECO:0007669"/>
    <property type="project" value="UniProtKB-UniRule"/>
</dbReference>
<dbReference type="GO" id="GO:0000287">
    <property type="term" value="F:magnesium ion binding"/>
    <property type="evidence" value="ECO:0007669"/>
    <property type="project" value="UniProtKB-UniRule"/>
</dbReference>
<dbReference type="GO" id="GO:0030145">
    <property type="term" value="F:manganese ion binding"/>
    <property type="evidence" value="ECO:0007669"/>
    <property type="project" value="UniProtKB-UniRule"/>
</dbReference>
<dbReference type="GO" id="GO:0008270">
    <property type="term" value="F:zinc ion binding"/>
    <property type="evidence" value="ECO:0007669"/>
    <property type="project" value="UniProtKB-UniRule"/>
</dbReference>
<dbReference type="GO" id="GO:0009231">
    <property type="term" value="P:riboflavin biosynthetic process"/>
    <property type="evidence" value="ECO:0007669"/>
    <property type="project" value="UniProtKB-UniRule"/>
</dbReference>
<dbReference type="CDD" id="cd00641">
    <property type="entry name" value="GTP_cyclohydro2"/>
    <property type="match status" value="1"/>
</dbReference>
<dbReference type="FunFam" id="3.40.50.10990:FF:000001">
    <property type="entry name" value="Riboflavin biosynthesis protein RibBA"/>
    <property type="match status" value="1"/>
</dbReference>
<dbReference type="FunFam" id="3.90.870.10:FF:000001">
    <property type="entry name" value="Riboflavin biosynthesis protein RibBA"/>
    <property type="match status" value="1"/>
</dbReference>
<dbReference type="Gene3D" id="3.90.870.10">
    <property type="entry name" value="DHBP synthase"/>
    <property type="match status" value="1"/>
</dbReference>
<dbReference type="Gene3D" id="3.40.50.10990">
    <property type="entry name" value="GTP cyclohydrolase II"/>
    <property type="match status" value="1"/>
</dbReference>
<dbReference type="HAMAP" id="MF_00179">
    <property type="entry name" value="RibA"/>
    <property type="match status" value="1"/>
</dbReference>
<dbReference type="HAMAP" id="MF_00180">
    <property type="entry name" value="RibB"/>
    <property type="match status" value="1"/>
</dbReference>
<dbReference type="HAMAP" id="MF_01283">
    <property type="entry name" value="RibBA"/>
    <property type="match status" value="1"/>
</dbReference>
<dbReference type="InterPro" id="IPR017945">
    <property type="entry name" value="DHBP_synth_RibB-like_a/b_dom"/>
</dbReference>
<dbReference type="InterPro" id="IPR000422">
    <property type="entry name" value="DHBP_synthase_RibB"/>
</dbReference>
<dbReference type="InterPro" id="IPR032677">
    <property type="entry name" value="GTP_cyclohydro_II"/>
</dbReference>
<dbReference type="InterPro" id="IPR000926">
    <property type="entry name" value="RibA"/>
</dbReference>
<dbReference type="InterPro" id="IPR036144">
    <property type="entry name" value="RibA-like_sf"/>
</dbReference>
<dbReference type="InterPro" id="IPR016299">
    <property type="entry name" value="Riboflavin_synth_RibBA"/>
</dbReference>
<dbReference type="NCBIfam" id="NF001591">
    <property type="entry name" value="PRK00393.1"/>
    <property type="match status" value="1"/>
</dbReference>
<dbReference type="NCBIfam" id="NF006803">
    <property type="entry name" value="PRK09311.1"/>
    <property type="match status" value="1"/>
</dbReference>
<dbReference type="NCBIfam" id="TIGR00505">
    <property type="entry name" value="ribA"/>
    <property type="match status" value="1"/>
</dbReference>
<dbReference type="NCBIfam" id="TIGR00506">
    <property type="entry name" value="ribB"/>
    <property type="match status" value="1"/>
</dbReference>
<dbReference type="PANTHER" id="PTHR21327:SF18">
    <property type="entry name" value="3,4-DIHYDROXY-2-BUTANONE 4-PHOSPHATE SYNTHASE"/>
    <property type="match status" value="1"/>
</dbReference>
<dbReference type="PANTHER" id="PTHR21327">
    <property type="entry name" value="GTP CYCLOHYDROLASE II-RELATED"/>
    <property type="match status" value="1"/>
</dbReference>
<dbReference type="Pfam" id="PF00926">
    <property type="entry name" value="DHBP_synthase"/>
    <property type="match status" value="1"/>
</dbReference>
<dbReference type="Pfam" id="PF00925">
    <property type="entry name" value="GTP_cyclohydro2"/>
    <property type="match status" value="1"/>
</dbReference>
<dbReference type="PIRSF" id="PIRSF001259">
    <property type="entry name" value="RibA"/>
    <property type="match status" value="1"/>
</dbReference>
<dbReference type="SUPFAM" id="SSF142695">
    <property type="entry name" value="RibA-like"/>
    <property type="match status" value="1"/>
</dbReference>
<dbReference type="SUPFAM" id="SSF55821">
    <property type="entry name" value="YrdC/RibB"/>
    <property type="match status" value="1"/>
</dbReference>
<gene>
    <name evidence="1" type="primary">ribBA</name>
    <name type="ordered locus">Sare_1870</name>
</gene>